<dbReference type="EMBL" id="BC081127">
    <property type="protein sequence ID" value="AAH81127.1"/>
    <property type="molecule type" value="mRNA"/>
</dbReference>
<dbReference type="SMR" id="Q66IZ7"/>
<dbReference type="DNASU" id="447537"/>
<dbReference type="GeneID" id="447537"/>
<dbReference type="KEGG" id="xla:447537"/>
<dbReference type="AGR" id="Xenbase:XB-GENE-6253763"/>
<dbReference type="CTD" id="447537"/>
<dbReference type="Xenbase" id="XB-GENE-6253763">
    <property type="gene designation" value="ndel1.S"/>
</dbReference>
<dbReference type="OMA" id="MEENSIN"/>
<dbReference type="OrthoDB" id="5877028at2759"/>
<dbReference type="Proteomes" id="UP000186698">
    <property type="component" value="Chromosome 9_10S"/>
</dbReference>
<dbReference type="Bgee" id="447537">
    <property type="expression patterns" value="Expressed in muscle tissue and 19 other cell types or tissues"/>
</dbReference>
<dbReference type="GO" id="GO:0005813">
    <property type="term" value="C:centrosome"/>
    <property type="evidence" value="ECO:0000318"/>
    <property type="project" value="GO_Central"/>
</dbReference>
<dbReference type="GO" id="GO:0005737">
    <property type="term" value="C:cytoplasm"/>
    <property type="evidence" value="ECO:0007669"/>
    <property type="project" value="UniProtKB-KW"/>
</dbReference>
<dbReference type="GO" id="GO:0005871">
    <property type="term" value="C:kinesin complex"/>
    <property type="evidence" value="ECO:0000318"/>
    <property type="project" value="GO_Central"/>
</dbReference>
<dbReference type="GO" id="GO:0000776">
    <property type="term" value="C:kinetochore"/>
    <property type="evidence" value="ECO:0000318"/>
    <property type="project" value="GO_Central"/>
</dbReference>
<dbReference type="GO" id="GO:0005874">
    <property type="term" value="C:microtubule"/>
    <property type="evidence" value="ECO:0007669"/>
    <property type="project" value="UniProtKB-KW"/>
</dbReference>
<dbReference type="GO" id="GO:0005819">
    <property type="term" value="C:spindle"/>
    <property type="evidence" value="ECO:0007669"/>
    <property type="project" value="UniProtKB-SubCell"/>
</dbReference>
<dbReference type="GO" id="GO:0008017">
    <property type="term" value="F:microtubule binding"/>
    <property type="evidence" value="ECO:0000318"/>
    <property type="project" value="GO_Central"/>
</dbReference>
<dbReference type="GO" id="GO:0016477">
    <property type="term" value="P:cell migration"/>
    <property type="evidence" value="ECO:0000318"/>
    <property type="project" value="GO_Central"/>
</dbReference>
<dbReference type="GO" id="GO:0051642">
    <property type="term" value="P:centrosome localization"/>
    <property type="evidence" value="ECO:0000318"/>
    <property type="project" value="GO_Central"/>
</dbReference>
<dbReference type="GO" id="GO:0007059">
    <property type="term" value="P:chromosome segregation"/>
    <property type="evidence" value="ECO:0000318"/>
    <property type="project" value="GO_Central"/>
</dbReference>
<dbReference type="GO" id="GO:0051303">
    <property type="term" value="P:establishment of chromosome localization"/>
    <property type="evidence" value="ECO:0000318"/>
    <property type="project" value="GO_Central"/>
</dbReference>
<dbReference type="GO" id="GO:0000132">
    <property type="term" value="P:establishment of mitotic spindle orientation"/>
    <property type="evidence" value="ECO:0000318"/>
    <property type="project" value="GO_Central"/>
</dbReference>
<dbReference type="GO" id="GO:0032418">
    <property type="term" value="P:lysosome localization"/>
    <property type="evidence" value="ECO:0000250"/>
    <property type="project" value="UniProtKB"/>
</dbReference>
<dbReference type="GO" id="GO:0007020">
    <property type="term" value="P:microtubule nucleation"/>
    <property type="evidence" value="ECO:0000318"/>
    <property type="project" value="GO_Central"/>
</dbReference>
<dbReference type="GO" id="GO:0007100">
    <property type="term" value="P:mitotic centrosome separation"/>
    <property type="evidence" value="ECO:0000318"/>
    <property type="project" value="GO_Central"/>
</dbReference>
<dbReference type="GO" id="GO:1900029">
    <property type="term" value="P:positive regulation of ruffle assembly"/>
    <property type="evidence" value="ECO:0000250"/>
    <property type="project" value="UniProtKB"/>
</dbReference>
<dbReference type="GO" id="GO:0010975">
    <property type="term" value="P:regulation of neuron projection development"/>
    <property type="evidence" value="ECO:0000318"/>
    <property type="project" value="GO_Central"/>
</dbReference>
<dbReference type="GO" id="GO:0047496">
    <property type="term" value="P:vesicle transport along microtubule"/>
    <property type="evidence" value="ECO:0000318"/>
    <property type="project" value="GO_Central"/>
</dbReference>
<dbReference type="Gene3D" id="6.10.250.1080">
    <property type="match status" value="1"/>
</dbReference>
<dbReference type="InterPro" id="IPR033494">
    <property type="entry name" value="NUDE"/>
</dbReference>
<dbReference type="InterPro" id="IPR006964">
    <property type="entry name" value="NUDE_dom"/>
</dbReference>
<dbReference type="PANTHER" id="PTHR10921">
    <property type="entry name" value="NUCLEAR DISTRIBUTION PROTEIN NUDE HOMOLOG 1"/>
    <property type="match status" value="1"/>
</dbReference>
<dbReference type="PANTHER" id="PTHR10921:SF0">
    <property type="entry name" value="NUCLEAR DISTRIBUTION PROTEIN NUDE-LIKE 1"/>
    <property type="match status" value="1"/>
</dbReference>
<dbReference type="Pfam" id="PF04880">
    <property type="entry name" value="NUDE_C"/>
    <property type="match status" value="1"/>
</dbReference>
<gene>
    <name type="primary">ndel1-b</name>
</gene>
<proteinExistence type="evidence at transcript level"/>
<feature type="chain" id="PRO_0000240220" description="Nuclear distribution protein nudE-like 1-B">
    <location>
        <begin position="1"/>
        <end position="344"/>
    </location>
</feature>
<feature type="region of interest" description="Disordered" evidence="4">
    <location>
        <begin position="186"/>
        <end position="209"/>
    </location>
</feature>
<feature type="region of interest" description="Disordered" evidence="4">
    <location>
        <begin position="325"/>
        <end position="344"/>
    </location>
</feature>
<feature type="coiled-coil region" evidence="3">
    <location>
        <begin position="13"/>
        <end position="190"/>
    </location>
</feature>
<feature type="compositionally biased region" description="Pro residues" evidence="4">
    <location>
        <begin position="333"/>
        <end position="344"/>
    </location>
</feature>
<reference key="1">
    <citation type="submission" date="2004-08" db="EMBL/GenBank/DDBJ databases">
        <authorList>
            <consortium name="NIH - Xenopus Gene Collection (XGC) project"/>
        </authorList>
    </citation>
    <scope>NUCLEOTIDE SEQUENCE [LARGE SCALE MRNA]</scope>
    <source>
        <tissue>Oocyte</tissue>
    </source>
</reference>
<name>NDL1B_XENLA</name>
<comment type="function">
    <text evidence="1 2">Required for organization of the cellular microtubule array and microtubule anchoring at the centrosome. Positively regulates the activity of the minus-end directed microtubule motor protein dynein. May enhance dynein-mediated microtubule sliding by targeting dynein to the microtubule plus end. Positively regulates lysosome peripheral distribution and ruffled border formation in osteoclasts.</text>
</comment>
<comment type="subcellular location">
    <subcellularLocation>
        <location evidence="1">Cytoplasm</location>
        <location evidence="1">Cytoskeleton</location>
    </subcellularLocation>
    <subcellularLocation>
        <location evidence="1">Cytoplasm</location>
        <location evidence="1">Cytoskeleton</location>
        <location evidence="1">Microtubule organizing center</location>
        <location evidence="1">Centrosome</location>
    </subcellularLocation>
    <subcellularLocation>
        <location evidence="1">Cytoplasm</location>
        <location evidence="1">Cytoskeleton</location>
        <location evidence="1">Spindle</location>
    </subcellularLocation>
    <text evidence="1">Localizes to the interphase centrosome and the mitotic spindle.</text>
</comment>
<comment type="PTM">
    <text evidence="1">Phosphorylated in mitosis.</text>
</comment>
<comment type="similarity">
    <text evidence="5">Belongs to the nudE family.</text>
</comment>
<protein>
    <recommendedName>
        <fullName>Nuclear distribution protein nudE-like 1-B</fullName>
    </recommendedName>
</protein>
<keyword id="KW-0175">Coiled coil</keyword>
<keyword id="KW-0963">Cytoplasm</keyword>
<keyword id="KW-0206">Cytoskeleton</keyword>
<keyword id="KW-0493">Microtubule</keyword>
<keyword id="KW-0597">Phosphoprotein</keyword>
<keyword id="KW-1185">Reference proteome</keyword>
<keyword id="KW-0813">Transport</keyword>
<evidence type="ECO:0000250" key="1"/>
<evidence type="ECO:0000250" key="2">
    <source>
        <dbReference type="UniProtKB" id="Q9ERR1"/>
    </source>
</evidence>
<evidence type="ECO:0000255" key="3"/>
<evidence type="ECO:0000256" key="4">
    <source>
        <dbReference type="SAM" id="MobiDB-lite"/>
    </source>
</evidence>
<evidence type="ECO:0000305" key="5"/>
<organism>
    <name type="scientific">Xenopus laevis</name>
    <name type="common">African clawed frog</name>
    <dbReference type="NCBI Taxonomy" id="8355"/>
    <lineage>
        <taxon>Eukaryota</taxon>
        <taxon>Metazoa</taxon>
        <taxon>Chordata</taxon>
        <taxon>Craniata</taxon>
        <taxon>Vertebrata</taxon>
        <taxon>Euteleostomi</taxon>
        <taxon>Amphibia</taxon>
        <taxon>Batrachia</taxon>
        <taxon>Anura</taxon>
        <taxon>Pipoidea</taxon>
        <taxon>Pipidae</taxon>
        <taxon>Xenopodinae</taxon>
        <taxon>Xenopus</taxon>
        <taxon>Xenopus</taxon>
    </lineage>
</organism>
<accession>Q66IZ7</accession>
<sequence>MENEEIPEFLSPKEEIVYWRELAKRLKQSYQEARDELIEFQEGSRELEAELETQLIQAEQRNRDLLGDNQRLKCEVDSLKEKLEHQYAQSYKQVSLLEDELVRARSIKDQLHKYVRELEQANDDLERAKRATIVSLEDFEQRLNQAIERNAFLESELDEKESLLVSVQRLKDEARDLRQELAVRERQTDGIRKSAPSSPTLDCEKTDSSVQASLSLPATPVGKISENSFTSPKGIPNGFGTTPLTPSARISALNIVGDLLRKVGALESKLAACRNFAKDQASRKSYTPANLNSSSSSVLNSSGVKYSHAGHTSFFDKGAVNGYDPPGVLGSRPPSPPGLLPLSV</sequence>